<organism>
    <name type="scientific">Clostridium perfringens (strain 13 / Type A)</name>
    <dbReference type="NCBI Taxonomy" id="195102"/>
    <lineage>
        <taxon>Bacteria</taxon>
        <taxon>Bacillati</taxon>
        <taxon>Bacillota</taxon>
        <taxon>Clostridia</taxon>
        <taxon>Eubacteriales</taxon>
        <taxon>Clostridiaceae</taxon>
        <taxon>Clostridium</taxon>
    </lineage>
</organism>
<protein>
    <recommendedName>
        <fullName evidence="1">Peptide methionine sulfoxide reductase MsrA</fullName>
        <shortName evidence="1">Protein-methionine-S-oxide reductase</shortName>
        <ecNumber evidence="1">1.8.4.11</ecNumber>
    </recommendedName>
    <alternativeName>
        <fullName evidence="1">Peptide-methionine (S)-S-oxide reductase</fullName>
        <shortName evidence="1">Peptide Met(O) reductase</shortName>
    </alternativeName>
</protein>
<name>MSRA_CLOPE</name>
<comment type="function">
    <text evidence="1">Has an important function as a repair enzyme for proteins that have been inactivated by oxidation. Catalyzes the reversible oxidation-reduction of methionine sulfoxide in proteins to methionine.</text>
</comment>
<comment type="catalytic activity">
    <reaction evidence="1">
        <text>L-methionyl-[protein] + [thioredoxin]-disulfide + H2O = L-methionyl-(S)-S-oxide-[protein] + [thioredoxin]-dithiol</text>
        <dbReference type="Rhea" id="RHEA:14217"/>
        <dbReference type="Rhea" id="RHEA-COMP:10698"/>
        <dbReference type="Rhea" id="RHEA-COMP:10700"/>
        <dbReference type="Rhea" id="RHEA-COMP:12313"/>
        <dbReference type="Rhea" id="RHEA-COMP:12315"/>
        <dbReference type="ChEBI" id="CHEBI:15377"/>
        <dbReference type="ChEBI" id="CHEBI:16044"/>
        <dbReference type="ChEBI" id="CHEBI:29950"/>
        <dbReference type="ChEBI" id="CHEBI:44120"/>
        <dbReference type="ChEBI" id="CHEBI:50058"/>
        <dbReference type="EC" id="1.8.4.11"/>
    </reaction>
</comment>
<comment type="catalytic activity">
    <reaction evidence="1">
        <text>[thioredoxin]-disulfide + L-methionine + H2O = L-methionine (S)-S-oxide + [thioredoxin]-dithiol</text>
        <dbReference type="Rhea" id="RHEA:19993"/>
        <dbReference type="Rhea" id="RHEA-COMP:10698"/>
        <dbReference type="Rhea" id="RHEA-COMP:10700"/>
        <dbReference type="ChEBI" id="CHEBI:15377"/>
        <dbReference type="ChEBI" id="CHEBI:29950"/>
        <dbReference type="ChEBI" id="CHEBI:50058"/>
        <dbReference type="ChEBI" id="CHEBI:57844"/>
        <dbReference type="ChEBI" id="CHEBI:58772"/>
        <dbReference type="EC" id="1.8.4.11"/>
    </reaction>
</comment>
<comment type="similarity">
    <text evidence="1">Belongs to the MsrA Met sulfoxide reductase family.</text>
</comment>
<gene>
    <name evidence="1" type="primary">msrA</name>
    <name type="ordered locus">CPE2588</name>
</gene>
<sequence>MKKIILAGGCFWGVEEFLSRINGVVSTEVGYANGRTENPTYEDICTKNTYFAEVCLVNYDENIISLKELLAKFWTIIDPTSLNKQGNDVGSQYRTGIYYVDSSDLEDILNSKEELQKSYSKKIVTEVKPLENYYKAEEYHQKYLKKNPNGYCHIKLD</sequence>
<reference key="1">
    <citation type="journal article" date="2002" name="Proc. Natl. Acad. Sci. U.S.A.">
        <title>Complete genome sequence of Clostridium perfringens, an anaerobic flesh-eater.</title>
        <authorList>
            <person name="Shimizu T."/>
            <person name="Ohtani K."/>
            <person name="Hirakawa H."/>
            <person name="Ohshima K."/>
            <person name="Yamashita A."/>
            <person name="Shiba T."/>
            <person name="Ogasawara N."/>
            <person name="Hattori M."/>
            <person name="Kuhara S."/>
            <person name="Hayashi H."/>
        </authorList>
    </citation>
    <scope>NUCLEOTIDE SEQUENCE [LARGE SCALE GENOMIC DNA]</scope>
    <source>
        <strain>13 / Type A</strain>
    </source>
</reference>
<accession>Q8XH97</accession>
<dbReference type="EC" id="1.8.4.11" evidence="1"/>
<dbReference type="EMBL" id="BA000016">
    <property type="protein sequence ID" value="BAB82294.1"/>
    <property type="molecule type" value="Genomic_DNA"/>
</dbReference>
<dbReference type="RefSeq" id="WP_011010977.1">
    <property type="nucleotide sequence ID" value="NC_003366.1"/>
</dbReference>
<dbReference type="SMR" id="Q8XH97"/>
<dbReference type="STRING" id="195102.gene:10491922"/>
<dbReference type="KEGG" id="cpe:CPE2588"/>
<dbReference type="HOGENOM" id="CLU_031040_10_2_9"/>
<dbReference type="Proteomes" id="UP000000818">
    <property type="component" value="Chromosome"/>
</dbReference>
<dbReference type="GO" id="GO:0005737">
    <property type="term" value="C:cytoplasm"/>
    <property type="evidence" value="ECO:0007669"/>
    <property type="project" value="TreeGrafter"/>
</dbReference>
<dbReference type="GO" id="GO:0036456">
    <property type="term" value="F:L-methionine-(S)-S-oxide reductase activity"/>
    <property type="evidence" value="ECO:0007669"/>
    <property type="project" value="TreeGrafter"/>
</dbReference>
<dbReference type="GO" id="GO:0008113">
    <property type="term" value="F:peptide-methionine (S)-S-oxide reductase activity"/>
    <property type="evidence" value="ECO:0007669"/>
    <property type="project" value="UniProtKB-UniRule"/>
</dbReference>
<dbReference type="GO" id="GO:0034599">
    <property type="term" value="P:cellular response to oxidative stress"/>
    <property type="evidence" value="ECO:0007669"/>
    <property type="project" value="TreeGrafter"/>
</dbReference>
<dbReference type="GO" id="GO:0036211">
    <property type="term" value="P:protein modification process"/>
    <property type="evidence" value="ECO:0007669"/>
    <property type="project" value="UniProtKB-UniRule"/>
</dbReference>
<dbReference type="Gene3D" id="3.30.1060.10">
    <property type="entry name" value="Peptide methionine sulphoxide reductase MsrA"/>
    <property type="match status" value="1"/>
</dbReference>
<dbReference type="HAMAP" id="MF_01401">
    <property type="entry name" value="MsrA"/>
    <property type="match status" value="1"/>
</dbReference>
<dbReference type="InterPro" id="IPR002569">
    <property type="entry name" value="Met_Sox_Rdtase_MsrA_dom"/>
</dbReference>
<dbReference type="InterPro" id="IPR036509">
    <property type="entry name" value="Met_Sox_Rdtase_MsrA_sf"/>
</dbReference>
<dbReference type="InterPro" id="IPR050162">
    <property type="entry name" value="MsrA_MetSO_reductase"/>
</dbReference>
<dbReference type="NCBIfam" id="TIGR00401">
    <property type="entry name" value="msrA"/>
    <property type="match status" value="1"/>
</dbReference>
<dbReference type="PANTHER" id="PTHR42799">
    <property type="entry name" value="MITOCHONDRIAL PEPTIDE METHIONINE SULFOXIDE REDUCTASE"/>
    <property type="match status" value="1"/>
</dbReference>
<dbReference type="PANTHER" id="PTHR42799:SF2">
    <property type="entry name" value="MITOCHONDRIAL PEPTIDE METHIONINE SULFOXIDE REDUCTASE"/>
    <property type="match status" value="1"/>
</dbReference>
<dbReference type="Pfam" id="PF01625">
    <property type="entry name" value="PMSR"/>
    <property type="match status" value="1"/>
</dbReference>
<dbReference type="SUPFAM" id="SSF55068">
    <property type="entry name" value="Peptide methionine sulfoxide reductase"/>
    <property type="match status" value="1"/>
</dbReference>
<keyword id="KW-0560">Oxidoreductase</keyword>
<keyword id="KW-1185">Reference proteome</keyword>
<evidence type="ECO:0000255" key="1">
    <source>
        <dbReference type="HAMAP-Rule" id="MF_01401"/>
    </source>
</evidence>
<proteinExistence type="inferred from homology"/>
<feature type="chain" id="PRO_0000138539" description="Peptide methionine sulfoxide reductase MsrA">
    <location>
        <begin position="1"/>
        <end position="157"/>
    </location>
</feature>
<feature type="active site" evidence="1">
    <location>
        <position position="10"/>
    </location>
</feature>